<evidence type="ECO:0000255" key="1"/>
<evidence type="ECO:0000256" key="2">
    <source>
        <dbReference type="SAM" id="MobiDB-lite"/>
    </source>
</evidence>
<evidence type="ECO:0000305" key="3"/>
<protein>
    <recommendedName>
        <fullName>Uncharacterized protein SAOUHSC_00997</fullName>
    </recommendedName>
    <alternativeName>
        <fullName>ORF1</fullName>
    </alternativeName>
</protein>
<gene>
    <name type="ordered locus">SAOUHSC_00997</name>
</gene>
<accession>P52078</accession>
<accession>Q2FZK4</accession>
<comment type="similarity">
    <text evidence="3">Belongs to the LytR/CpsA/Psr (LCP) family.</text>
</comment>
<dbReference type="EMBL" id="CP000253">
    <property type="protein sequence ID" value="ABD30121.1"/>
    <property type="molecule type" value="Genomic_DNA"/>
</dbReference>
<dbReference type="EMBL" id="D17366">
    <property type="protein sequence ID" value="BAA04182.1"/>
    <property type="molecule type" value="Genomic_DNA"/>
</dbReference>
<dbReference type="EMBL" id="L41499">
    <property type="protein sequence ID" value="AAA99979.1"/>
    <property type="molecule type" value="Genomic_DNA"/>
</dbReference>
<dbReference type="PIR" id="A55598">
    <property type="entry name" value="A55598"/>
</dbReference>
<dbReference type="RefSeq" id="WP_001031975.1">
    <property type="nucleotide sequence ID" value="NZ_LS483365.1"/>
</dbReference>
<dbReference type="RefSeq" id="YP_499549.1">
    <property type="nucleotide sequence ID" value="NC_007795.1"/>
</dbReference>
<dbReference type="SMR" id="P52078"/>
<dbReference type="STRING" id="93061.SAOUHSC_00997"/>
<dbReference type="PaxDb" id="1280-SAXN108_1053"/>
<dbReference type="GeneID" id="3920397"/>
<dbReference type="KEGG" id="sao:SAOUHSC_00997"/>
<dbReference type="PATRIC" id="fig|93061.5.peg.915"/>
<dbReference type="eggNOG" id="COG1316">
    <property type="taxonomic scope" value="Bacteria"/>
</dbReference>
<dbReference type="HOGENOM" id="CLU_016455_2_1_9"/>
<dbReference type="OrthoDB" id="27330at2"/>
<dbReference type="PRO" id="PR:P52078"/>
<dbReference type="Proteomes" id="UP000008816">
    <property type="component" value="Chromosome"/>
</dbReference>
<dbReference type="Gene3D" id="3.40.630.190">
    <property type="entry name" value="LCP protein"/>
    <property type="match status" value="1"/>
</dbReference>
<dbReference type="InterPro" id="IPR050922">
    <property type="entry name" value="LytR/CpsA/Psr_CW_biosynth"/>
</dbReference>
<dbReference type="InterPro" id="IPR004474">
    <property type="entry name" value="LytR_CpsA_psr"/>
</dbReference>
<dbReference type="NCBIfam" id="TIGR00350">
    <property type="entry name" value="lytR_cpsA_psr"/>
    <property type="match status" value="1"/>
</dbReference>
<dbReference type="PANTHER" id="PTHR33392:SF3">
    <property type="entry name" value="POLYISOPRENYL-TEICHOIC ACID--PEPTIDOGLYCAN TEICHOIC ACID TRANSFERASE TAGT"/>
    <property type="match status" value="1"/>
</dbReference>
<dbReference type="PANTHER" id="PTHR33392">
    <property type="entry name" value="POLYISOPRENYL-TEICHOIC ACID--PEPTIDOGLYCAN TEICHOIC ACID TRANSFERASE TAGU"/>
    <property type="match status" value="1"/>
</dbReference>
<dbReference type="Pfam" id="PF03816">
    <property type="entry name" value="LytR_cpsA_psr"/>
    <property type="match status" value="1"/>
</dbReference>
<sequence length="405" mass="45685">MNKFLKYFLILLALVLIVVPIVFATLLFKTSQDAFESSQDSKNANRQSNLRDNKVNPEEQPISILFLGIDDNDGRRKKGQDAEHSRSDAMILTTFNQSKHQIRMLSIPRDTISYIPKVGYYDKITHAHAYGGPIAAMDSVEATMNVPVDYYVRVNMKAFVEAVNELGGIYYDVPYDLNEPNTDDTGKIKIKKGYQKLNGDEALAVARTRHHDSDLKRGQRQMELIKILFQKAQEVDSIDKLDNVIQIVGKNAKHNLTNSEIKALAKMYLTNDVEIKTAQLKGKDDMLNGIYYYHPSVESIQKYANLLRKDLELSPINDKNDFLDQRVINHYGSLIPLTPLDNSLLRKEQNDTTDKDKTSNENSDSTNNSDSSNQQQPATDQNSNQNQGGTQQAPQASNNQNGVVN</sequence>
<organism>
    <name type="scientific">Staphylococcus aureus (strain NCTC 8325 / PS 47)</name>
    <dbReference type="NCBI Taxonomy" id="93061"/>
    <lineage>
        <taxon>Bacteria</taxon>
        <taxon>Bacillati</taxon>
        <taxon>Bacillota</taxon>
        <taxon>Bacilli</taxon>
        <taxon>Bacillales</taxon>
        <taxon>Staphylococcaceae</taxon>
        <taxon>Staphylococcus</taxon>
    </lineage>
</organism>
<keyword id="KW-1185">Reference proteome</keyword>
<keyword id="KW-0732">Signal</keyword>
<proteinExistence type="inferred from homology"/>
<reference key="1">
    <citation type="book" date="2006" name="Gram positive pathogens, 2nd edition">
        <title>The Staphylococcus aureus NCTC 8325 genome.</title>
        <editorList>
            <person name="Fischetti V."/>
            <person name="Novick R."/>
            <person name="Ferretti J."/>
            <person name="Portnoy D."/>
            <person name="Rood J."/>
        </editorList>
        <authorList>
            <person name="Gillaspy A.F."/>
            <person name="Worrell V."/>
            <person name="Orvis J."/>
            <person name="Roe B.A."/>
            <person name="Dyer D.W."/>
            <person name="Iandolo J.J."/>
        </authorList>
    </citation>
    <scope>NUCLEOTIDE SEQUENCE [LARGE SCALE GENOMIC DNA]</scope>
    <source>
        <strain>NCTC 8325 / PS 47</strain>
    </source>
</reference>
<reference key="2">
    <citation type="journal article" date="1995" name="Proc. Natl. Acad. Sci. U.S.A.">
        <title>A Staphylococcus aureus autolysin that has an N-acetylmuramoyl-L-alanine amidase domain and an endo-beta-N-acetylglucosaminidase domain: cloning, sequence analysis, and characterization.</title>
        <authorList>
            <person name="Oshida T."/>
            <person name="Sugai M."/>
            <person name="Komatsuzawa H."/>
            <person name="Hong Y.-M."/>
            <person name="Suginaka H."/>
            <person name="Tomasz A."/>
        </authorList>
    </citation>
    <scope>NUCLEOTIDE SEQUENCE [GENOMIC DNA] OF 194-405</scope>
</reference>
<reference key="3">
    <citation type="journal article" date="1995" name="J. Bacteriol.">
        <title>Molecular characterization and functional analysis of the major autolysin of Staphylococcus aureus 8325/4.</title>
        <authorList>
            <person name="Foster S.J."/>
        </authorList>
    </citation>
    <scope>NUCLEOTIDE SEQUENCE [GENOMIC DNA] OF 324-405</scope>
</reference>
<name>Y997_STAA8</name>
<feature type="signal peptide" evidence="1">
    <location>
        <begin position="1"/>
        <end position="34"/>
    </location>
</feature>
<feature type="chain" id="PRO_0000066129" description="Uncharacterized protein SAOUHSC_00997">
    <location>
        <begin position="35"/>
        <end position="405"/>
    </location>
</feature>
<feature type="region of interest" description="Disordered" evidence="2">
    <location>
        <begin position="348"/>
        <end position="405"/>
    </location>
</feature>
<feature type="compositionally biased region" description="Basic and acidic residues" evidence="2">
    <location>
        <begin position="348"/>
        <end position="359"/>
    </location>
</feature>
<feature type="compositionally biased region" description="Low complexity" evidence="2">
    <location>
        <begin position="360"/>
        <end position="373"/>
    </location>
</feature>
<feature type="compositionally biased region" description="Low complexity" evidence="2">
    <location>
        <begin position="381"/>
        <end position="392"/>
    </location>
</feature>
<feature type="compositionally biased region" description="Polar residues" evidence="2">
    <location>
        <begin position="393"/>
        <end position="405"/>
    </location>
</feature>